<proteinExistence type="inferred from homology"/>
<feature type="chain" id="PRO_0000383428" description="L-lactate dehydrogenase">
    <location>
        <begin position="1"/>
        <end position="396"/>
    </location>
</feature>
<feature type="domain" description="FMN hydroxy acid dehydrogenase" evidence="1">
    <location>
        <begin position="1"/>
        <end position="380"/>
    </location>
</feature>
<feature type="active site" description="Proton acceptor" evidence="1">
    <location>
        <position position="275"/>
    </location>
</feature>
<feature type="binding site" evidence="1">
    <location>
        <position position="24"/>
    </location>
    <ligand>
        <name>substrate</name>
    </ligand>
</feature>
<feature type="binding site" evidence="1">
    <location>
        <position position="106"/>
    </location>
    <ligand>
        <name>FMN</name>
        <dbReference type="ChEBI" id="CHEBI:58210"/>
    </ligand>
</feature>
<feature type="binding site" evidence="1">
    <location>
        <position position="127"/>
    </location>
    <ligand>
        <name>FMN</name>
        <dbReference type="ChEBI" id="CHEBI:58210"/>
    </ligand>
</feature>
<feature type="binding site" evidence="1">
    <location>
        <position position="129"/>
    </location>
    <ligand>
        <name>substrate</name>
    </ligand>
</feature>
<feature type="binding site" evidence="1">
    <location>
        <position position="155"/>
    </location>
    <ligand>
        <name>FMN</name>
        <dbReference type="ChEBI" id="CHEBI:58210"/>
    </ligand>
</feature>
<feature type="binding site" evidence="1">
    <location>
        <position position="164"/>
    </location>
    <ligand>
        <name>substrate</name>
    </ligand>
</feature>
<feature type="binding site" evidence="1">
    <location>
        <position position="251"/>
    </location>
    <ligand>
        <name>FMN</name>
        <dbReference type="ChEBI" id="CHEBI:58210"/>
    </ligand>
</feature>
<feature type="binding site" evidence="1">
    <location>
        <position position="278"/>
    </location>
    <ligand>
        <name>substrate</name>
    </ligand>
</feature>
<feature type="binding site" evidence="1">
    <location>
        <begin position="306"/>
        <end position="330"/>
    </location>
    <ligand>
        <name>FMN</name>
        <dbReference type="ChEBI" id="CHEBI:58210"/>
    </ligand>
</feature>
<name>LLDD_ECO7I</name>
<gene>
    <name evidence="1" type="primary">lldD</name>
    <name type="ordered locus">ECIAI39_4126</name>
</gene>
<organism>
    <name type="scientific">Escherichia coli O7:K1 (strain IAI39 / ExPEC)</name>
    <dbReference type="NCBI Taxonomy" id="585057"/>
    <lineage>
        <taxon>Bacteria</taxon>
        <taxon>Pseudomonadati</taxon>
        <taxon>Pseudomonadota</taxon>
        <taxon>Gammaproteobacteria</taxon>
        <taxon>Enterobacterales</taxon>
        <taxon>Enterobacteriaceae</taxon>
        <taxon>Escherichia</taxon>
    </lineage>
</organism>
<reference key="1">
    <citation type="journal article" date="2009" name="PLoS Genet.">
        <title>Organised genome dynamics in the Escherichia coli species results in highly diverse adaptive paths.</title>
        <authorList>
            <person name="Touchon M."/>
            <person name="Hoede C."/>
            <person name="Tenaillon O."/>
            <person name="Barbe V."/>
            <person name="Baeriswyl S."/>
            <person name="Bidet P."/>
            <person name="Bingen E."/>
            <person name="Bonacorsi S."/>
            <person name="Bouchier C."/>
            <person name="Bouvet O."/>
            <person name="Calteau A."/>
            <person name="Chiapello H."/>
            <person name="Clermont O."/>
            <person name="Cruveiller S."/>
            <person name="Danchin A."/>
            <person name="Diard M."/>
            <person name="Dossat C."/>
            <person name="Karoui M.E."/>
            <person name="Frapy E."/>
            <person name="Garry L."/>
            <person name="Ghigo J.M."/>
            <person name="Gilles A.M."/>
            <person name="Johnson J."/>
            <person name="Le Bouguenec C."/>
            <person name="Lescat M."/>
            <person name="Mangenot S."/>
            <person name="Martinez-Jehanne V."/>
            <person name="Matic I."/>
            <person name="Nassif X."/>
            <person name="Oztas S."/>
            <person name="Petit M.A."/>
            <person name="Pichon C."/>
            <person name="Rouy Z."/>
            <person name="Ruf C.S."/>
            <person name="Schneider D."/>
            <person name="Tourret J."/>
            <person name="Vacherie B."/>
            <person name="Vallenet D."/>
            <person name="Medigue C."/>
            <person name="Rocha E.P.C."/>
            <person name="Denamur E."/>
        </authorList>
    </citation>
    <scope>NUCLEOTIDE SEQUENCE [LARGE SCALE GENOMIC DNA]</scope>
    <source>
        <strain>IAI39 / ExPEC</strain>
    </source>
</reference>
<sequence>MIISAASDYRAAAQRILPPFLFHYMDGGAYSEYTLRRNVEDLSEVALRQRILKNMSDLSLETTLFNEKLSMPVALGPVGLCGMYARRGEVQAAKAADAHGIPFTLSTVSVCPIEEVAPAIKRPMWFQLYVLRDRGFMRNALERAKAAGCSTLVFTVDMPTPGARYRDAHSGMSGPNAAMRRYLQAVTHPQWAWDVGLNGRPHDLGNISAYLGKPTGLEDYIGWLGNNFDPSISWKDLEWIRDFWDGPMVIKGILDPEDARDAVRFGADGIVVSNHGGRQLDGVLSSARALPAIADAVKGDIAILADSGIRNGLDVVRMIALGADTVLLGRAFLYALATAGQAGVANLLNLIEKEMKVAMTLTGAKSISEITQDSLVQGLGKELPAALAPMAKGNAA</sequence>
<keyword id="KW-0997">Cell inner membrane</keyword>
<keyword id="KW-1003">Cell membrane</keyword>
<keyword id="KW-0285">Flavoprotein</keyword>
<keyword id="KW-0288">FMN</keyword>
<keyword id="KW-0472">Membrane</keyword>
<keyword id="KW-0560">Oxidoreductase</keyword>
<dbReference type="EC" id="1.1.-.-" evidence="1"/>
<dbReference type="EMBL" id="CU928164">
    <property type="protein sequence ID" value="CAR20234.1"/>
    <property type="molecule type" value="Genomic_DNA"/>
</dbReference>
<dbReference type="RefSeq" id="WP_000586976.1">
    <property type="nucleotide sequence ID" value="NC_011750.1"/>
</dbReference>
<dbReference type="RefSeq" id="YP_002410003.1">
    <property type="nucleotide sequence ID" value="NC_011750.1"/>
</dbReference>
<dbReference type="SMR" id="B7NPB4"/>
<dbReference type="STRING" id="585057.ECIAI39_4126"/>
<dbReference type="GeneID" id="75173802"/>
<dbReference type="KEGG" id="ect:ECIAI39_4126"/>
<dbReference type="PATRIC" id="fig|585057.6.peg.4276"/>
<dbReference type="HOGENOM" id="CLU_020639_0_0_6"/>
<dbReference type="Proteomes" id="UP000000749">
    <property type="component" value="Chromosome"/>
</dbReference>
<dbReference type="GO" id="GO:0005886">
    <property type="term" value="C:plasma membrane"/>
    <property type="evidence" value="ECO:0007669"/>
    <property type="project" value="UniProtKB-SubCell"/>
</dbReference>
<dbReference type="GO" id="GO:0010181">
    <property type="term" value="F:FMN binding"/>
    <property type="evidence" value="ECO:0007669"/>
    <property type="project" value="InterPro"/>
</dbReference>
<dbReference type="GO" id="GO:0004459">
    <property type="term" value="F:L-lactate dehydrogenase activity"/>
    <property type="evidence" value="ECO:0007669"/>
    <property type="project" value="UniProtKB-UniRule"/>
</dbReference>
<dbReference type="GO" id="GO:0009060">
    <property type="term" value="P:aerobic respiration"/>
    <property type="evidence" value="ECO:0007669"/>
    <property type="project" value="TreeGrafter"/>
</dbReference>
<dbReference type="GO" id="GO:0006089">
    <property type="term" value="P:lactate metabolic process"/>
    <property type="evidence" value="ECO:0007669"/>
    <property type="project" value="UniProtKB-UniRule"/>
</dbReference>
<dbReference type="CDD" id="cd02809">
    <property type="entry name" value="alpha_hydroxyacid_oxid_FMN"/>
    <property type="match status" value="1"/>
</dbReference>
<dbReference type="FunFam" id="3.20.20.70:FF:000029">
    <property type="entry name" value="L-lactate dehydrogenase"/>
    <property type="match status" value="1"/>
</dbReference>
<dbReference type="Gene3D" id="3.20.20.70">
    <property type="entry name" value="Aldolase class I"/>
    <property type="match status" value="1"/>
</dbReference>
<dbReference type="HAMAP" id="MF_01559">
    <property type="entry name" value="L_lact_dehydr"/>
    <property type="match status" value="1"/>
</dbReference>
<dbReference type="InterPro" id="IPR013785">
    <property type="entry name" value="Aldolase_TIM"/>
</dbReference>
<dbReference type="InterPro" id="IPR012133">
    <property type="entry name" value="Alpha-hydoxy_acid_DH_FMN"/>
</dbReference>
<dbReference type="InterPro" id="IPR000262">
    <property type="entry name" value="FMN-dep_DH"/>
</dbReference>
<dbReference type="InterPro" id="IPR037396">
    <property type="entry name" value="FMN_HAD"/>
</dbReference>
<dbReference type="InterPro" id="IPR008259">
    <property type="entry name" value="FMN_hydac_DH_AS"/>
</dbReference>
<dbReference type="InterPro" id="IPR020920">
    <property type="entry name" value="LldD"/>
</dbReference>
<dbReference type="NCBIfam" id="NF033901">
    <property type="entry name" value="L_lactate_LldD"/>
    <property type="match status" value="1"/>
</dbReference>
<dbReference type="NCBIfam" id="NF008398">
    <property type="entry name" value="PRK11197.1"/>
    <property type="match status" value="1"/>
</dbReference>
<dbReference type="PANTHER" id="PTHR10578:SF85">
    <property type="entry name" value="L-LACTATE DEHYDROGENASE"/>
    <property type="match status" value="1"/>
</dbReference>
<dbReference type="PANTHER" id="PTHR10578">
    <property type="entry name" value="S -2-HYDROXY-ACID OXIDASE-RELATED"/>
    <property type="match status" value="1"/>
</dbReference>
<dbReference type="Pfam" id="PF01070">
    <property type="entry name" value="FMN_dh"/>
    <property type="match status" value="1"/>
</dbReference>
<dbReference type="PIRSF" id="PIRSF000138">
    <property type="entry name" value="Al-hdrx_acd_dh"/>
    <property type="match status" value="1"/>
</dbReference>
<dbReference type="SUPFAM" id="SSF51395">
    <property type="entry name" value="FMN-linked oxidoreductases"/>
    <property type="match status" value="1"/>
</dbReference>
<dbReference type="PROSITE" id="PS00557">
    <property type="entry name" value="FMN_HYDROXY_ACID_DH_1"/>
    <property type="match status" value="1"/>
</dbReference>
<dbReference type="PROSITE" id="PS51349">
    <property type="entry name" value="FMN_HYDROXY_ACID_DH_2"/>
    <property type="match status" value="1"/>
</dbReference>
<accession>B7NPB4</accession>
<comment type="function">
    <text evidence="1">Catalyzes the conversion of L-lactate to pyruvate. Is coupled to the respiratory chain.</text>
</comment>
<comment type="catalytic activity">
    <reaction evidence="1">
        <text>(S)-lactate + A = pyruvate + AH2</text>
        <dbReference type="Rhea" id="RHEA:45816"/>
        <dbReference type="ChEBI" id="CHEBI:13193"/>
        <dbReference type="ChEBI" id="CHEBI:15361"/>
        <dbReference type="ChEBI" id="CHEBI:16651"/>
        <dbReference type="ChEBI" id="CHEBI:17499"/>
    </reaction>
</comment>
<comment type="cofactor">
    <cofactor evidence="1">
        <name>FMN</name>
        <dbReference type="ChEBI" id="CHEBI:58210"/>
    </cofactor>
</comment>
<comment type="subcellular location">
    <subcellularLocation>
        <location evidence="1">Cell inner membrane</location>
        <topology evidence="1">Peripheral membrane protein</topology>
    </subcellularLocation>
</comment>
<comment type="similarity">
    <text evidence="1">Belongs to the FMN-dependent alpha-hydroxy acid dehydrogenase family.</text>
</comment>
<protein>
    <recommendedName>
        <fullName evidence="1">L-lactate dehydrogenase</fullName>
        <ecNumber evidence="1">1.1.-.-</ecNumber>
    </recommendedName>
</protein>
<evidence type="ECO:0000255" key="1">
    <source>
        <dbReference type="HAMAP-Rule" id="MF_01559"/>
    </source>
</evidence>